<feature type="chain" id="PRO_1000022436" description="Potassium-transporting ATPase ATP-binding subunit">
    <location>
        <begin position="1"/>
        <end position="688"/>
    </location>
</feature>
<feature type="transmembrane region" description="Helical" evidence="1">
    <location>
        <begin position="37"/>
        <end position="57"/>
    </location>
</feature>
<feature type="transmembrane region" description="Helical" evidence="1">
    <location>
        <begin position="65"/>
        <end position="85"/>
    </location>
</feature>
<feature type="transmembrane region" description="Helical" evidence="1">
    <location>
        <begin position="219"/>
        <end position="239"/>
    </location>
</feature>
<feature type="transmembrane region" description="Helical" evidence="1">
    <location>
        <begin position="262"/>
        <end position="282"/>
    </location>
</feature>
<feature type="transmembrane region" description="Helical" evidence="1">
    <location>
        <begin position="586"/>
        <end position="606"/>
    </location>
</feature>
<feature type="transmembrane region" description="Helical" evidence="1">
    <location>
        <begin position="622"/>
        <end position="642"/>
    </location>
</feature>
<feature type="transmembrane region" description="Helical" evidence="1">
    <location>
        <begin position="668"/>
        <end position="688"/>
    </location>
</feature>
<feature type="active site" description="4-aspartylphosphate intermediate" evidence="1">
    <location>
        <position position="313"/>
    </location>
</feature>
<feature type="binding site" evidence="1">
    <location>
        <position position="350"/>
    </location>
    <ligand>
        <name>ATP</name>
        <dbReference type="ChEBI" id="CHEBI:30616"/>
    </ligand>
</feature>
<feature type="binding site" evidence="1">
    <location>
        <position position="354"/>
    </location>
    <ligand>
        <name>ATP</name>
        <dbReference type="ChEBI" id="CHEBI:30616"/>
    </ligand>
</feature>
<feature type="binding site" evidence="1">
    <location>
        <begin position="383"/>
        <end position="390"/>
    </location>
    <ligand>
        <name>ATP</name>
        <dbReference type="ChEBI" id="CHEBI:30616"/>
    </ligand>
</feature>
<feature type="binding site" evidence="1">
    <location>
        <position position="401"/>
    </location>
    <ligand>
        <name>ATP</name>
        <dbReference type="ChEBI" id="CHEBI:30616"/>
    </ligand>
</feature>
<feature type="binding site" evidence="1">
    <location>
        <position position="524"/>
    </location>
    <ligand>
        <name>Mg(2+)</name>
        <dbReference type="ChEBI" id="CHEBI:18420"/>
    </ligand>
</feature>
<feature type="binding site" evidence="1">
    <location>
        <position position="528"/>
    </location>
    <ligand>
        <name>Mg(2+)</name>
        <dbReference type="ChEBI" id="CHEBI:18420"/>
    </ligand>
</feature>
<keyword id="KW-0067">ATP-binding</keyword>
<keyword id="KW-1003">Cell membrane</keyword>
<keyword id="KW-0406">Ion transport</keyword>
<keyword id="KW-0460">Magnesium</keyword>
<keyword id="KW-0472">Membrane</keyword>
<keyword id="KW-0479">Metal-binding</keyword>
<keyword id="KW-0547">Nucleotide-binding</keyword>
<keyword id="KW-0597">Phosphoprotein</keyword>
<keyword id="KW-0630">Potassium</keyword>
<keyword id="KW-0633">Potassium transport</keyword>
<keyword id="KW-1278">Translocase</keyword>
<keyword id="KW-0812">Transmembrane</keyword>
<keyword id="KW-1133">Transmembrane helix</keyword>
<keyword id="KW-0813">Transport</keyword>
<evidence type="ECO:0000255" key="1">
    <source>
        <dbReference type="HAMAP-Rule" id="MF_00285"/>
    </source>
</evidence>
<reference key="1">
    <citation type="journal article" date="2006" name="Genome Res.">
        <title>Skewed genomic variability in strains of the toxigenic bacterial pathogen, Clostridium perfringens.</title>
        <authorList>
            <person name="Myers G.S.A."/>
            <person name="Rasko D.A."/>
            <person name="Cheung J.K."/>
            <person name="Ravel J."/>
            <person name="Seshadri R."/>
            <person name="DeBoy R.T."/>
            <person name="Ren Q."/>
            <person name="Varga J."/>
            <person name="Awad M.M."/>
            <person name="Brinkac L.M."/>
            <person name="Daugherty S.C."/>
            <person name="Haft D.H."/>
            <person name="Dodson R.J."/>
            <person name="Madupu R."/>
            <person name="Nelson W.C."/>
            <person name="Rosovitz M.J."/>
            <person name="Sullivan S.A."/>
            <person name="Khouri H."/>
            <person name="Dimitrov G.I."/>
            <person name="Watkins K.L."/>
            <person name="Mulligan S."/>
            <person name="Benton J."/>
            <person name="Radune D."/>
            <person name="Fisher D.J."/>
            <person name="Atkins H.S."/>
            <person name="Hiscox T."/>
            <person name="Jost B.H."/>
            <person name="Billington S.J."/>
            <person name="Songer J.G."/>
            <person name="McClane B.A."/>
            <person name="Titball R.W."/>
            <person name="Rood J.I."/>
            <person name="Melville S.B."/>
            <person name="Paulsen I.T."/>
        </authorList>
    </citation>
    <scope>NUCLEOTIDE SEQUENCE [LARGE SCALE GENOMIC DNA]</scope>
    <source>
        <strain>ATCC 13124 / DSM 756 / JCM 1290 / NCIMB 6125 / NCTC 8237 / S 107 / Type A</strain>
    </source>
</reference>
<comment type="function">
    <text evidence="1">Part of the high-affinity ATP-driven potassium transport (or Kdp) system, which catalyzes the hydrolysis of ATP coupled with the electrogenic transport of potassium into the cytoplasm. This subunit is responsible for energy coupling to the transport system and for the release of the potassium ions to the cytoplasm.</text>
</comment>
<comment type="catalytic activity">
    <reaction evidence="1">
        <text>K(+)(out) + ATP + H2O = K(+)(in) + ADP + phosphate + H(+)</text>
        <dbReference type="Rhea" id="RHEA:16777"/>
        <dbReference type="ChEBI" id="CHEBI:15377"/>
        <dbReference type="ChEBI" id="CHEBI:15378"/>
        <dbReference type="ChEBI" id="CHEBI:29103"/>
        <dbReference type="ChEBI" id="CHEBI:30616"/>
        <dbReference type="ChEBI" id="CHEBI:43474"/>
        <dbReference type="ChEBI" id="CHEBI:456216"/>
        <dbReference type="EC" id="7.2.2.6"/>
    </reaction>
    <physiologicalReaction direction="left-to-right" evidence="1">
        <dbReference type="Rhea" id="RHEA:16778"/>
    </physiologicalReaction>
</comment>
<comment type="subunit">
    <text evidence="1">The system is composed of three essential subunits: KdpA, KdpB and KdpC.</text>
</comment>
<comment type="subcellular location">
    <subcellularLocation>
        <location evidence="1">Cell membrane</location>
        <topology evidence="1">Multi-pass membrane protein</topology>
    </subcellularLocation>
</comment>
<comment type="similarity">
    <text evidence="1">Belongs to the cation transport ATPase (P-type) (TC 3.A.3) family. Type IA subfamily.</text>
</comment>
<proteinExistence type="inferred from homology"/>
<gene>
    <name evidence="1" type="primary">kdpB</name>
    <name type="ordered locus">CPF_1211</name>
</gene>
<name>KDPB_CLOP1</name>
<sequence>MKEKENSLFNSKMIKRAMKDSFIKLNPKIQLQNPVMFIVYIASILTTVLYVFSLFGIKDNSPSFILFISILLWFTVLFANFAEAIAEGRGKAQADALRSAKKDILANRIESIETKEKVSKVNSTELRKGDLIIVKAGEQIPADGDVVYGAASVDESAITGESAPVIRESGGDRSAVTGGTQVISDYIVVKVSNNPGESFMDKMIAMVEGASRKKTPNEIALQILLVSLTIIFLVVTASLYAYSEFASNQNGVINSTSVTSLLALLVCLAPTTIGALLSAIGIAGMSRLNQANVLAMSGRAIEAAGDVDILMLDKTGTITLGNRQASEFLPVDGANIEELADAAQLSSLADETPEGRSIVILAKEQFGIRGRDLSSSNAKFIEFTAKTRMSGVDFNGDEIRKGSAESIKKYITEHGGDFSDECEKKVEEIARKGGTPLVVAKNYKVLGIIYLKDIVKRGVKEKFSDLRKMGIKTIMITGDNPLTAAAIAAEAGVDDFLAEATPEGKLNMIKDFQKKGHLVAMTGDGTNDAPALAQADVAVAMNTGTQAAKEAGNMVDLDSSPTKLIEIVKIGKQLLMTRGALTTFSIANDIAKYFAIIPPLFIGLFPELSRLNIMNLQSPESAILSAVIYNAFIIIFLIPLALKGVKYREVSANKLLSRNLFVYGLGGIIAPFIAIKGIDILITMLGIV</sequence>
<protein>
    <recommendedName>
        <fullName evidence="1">Potassium-transporting ATPase ATP-binding subunit</fullName>
        <ecNumber evidence="1">7.2.2.6</ecNumber>
    </recommendedName>
    <alternativeName>
        <fullName evidence="1">ATP phosphohydrolase [potassium-transporting] B chain</fullName>
    </alternativeName>
    <alternativeName>
        <fullName evidence="1">Potassium-binding and translocating subunit B</fullName>
    </alternativeName>
    <alternativeName>
        <fullName evidence="1">Potassium-translocating ATPase B chain</fullName>
    </alternativeName>
</protein>
<dbReference type="EC" id="7.2.2.6" evidence="1"/>
<dbReference type="EMBL" id="CP000246">
    <property type="protein sequence ID" value="ABG84790.1"/>
    <property type="molecule type" value="Genomic_DNA"/>
</dbReference>
<dbReference type="RefSeq" id="WP_003456252.1">
    <property type="nucleotide sequence ID" value="NC_008261.1"/>
</dbReference>
<dbReference type="SMR" id="Q0TRT3"/>
<dbReference type="STRING" id="195103.CPF_1211"/>
<dbReference type="PaxDb" id="195103-CPF_1211"/>
<dbReference type="GeneID" id="93002512"/>
<dbReference type="KEGG" id="cpf:CPF_1211"/>
<dbReference type="eggNOG" id="COG2216">
    <property type="taxonomic scope" value="Bacteria"/>
</dbReference>
<dbReference type="HOGENOM" id="CLU_025728_2_0_9"/>
<dbReference type="Proteomes" id="UP000001823">
    <property type="component" value="Chromosome"/>
</dbReference>
<dbReference type="GO" id="GO:0005886">
    <property type="term" value="C:plasma membrane"/>
    <property type="evidence" value="ECO:0007669"/>
    <property type="project" value="UniProtKB-SubCell"/>
</dbReference>
<dbReference type="GO" id="GO:0005524">
    <property type="term" value="F:ATP binding"/>
    <property type="evidence" value="ECO:0007669"/>
    <property type="project" value="UniProtKB-UniRule"/>
</dbReference>
<dbReference type="GO" id="GO:0016887">
    <property type="term" value="F:ATP hydrolysis activity"/>
    <property type="evidence" value="ECO:0007669"/>
    <property type="project" value="InterPro"/>
</dbReference>
<dbReference type="GO" id="GO:0000287">
    <property type="term" value="F:magnesium ion binding"/>
    <property type="evidence" value="ECO:0007669"/>
    <property type="project" value="UniProtKB-UniRule"/>
</dbReference>
<dbReference type="GO" id="GO:0008556">
    <property type="term" value="F:P-type potassium transmembrane transporter activity"/>
    <property type="evidence" value="ECO:0007669"/>
    <property type="project" value="UniProtKB-UniRule"/>
</dbReference>
<dbReference type="CDD" id="cd02078">
    <property type="entry name" value="P-type_ATPase_K"/>
    <property type="match status" value="1"/>
</dbReference>
<dbReference type="FunFam" id="2.70.150.10:FF:000033">
    <property type="entry name" value="Potassium-transporting ATPase ATP-binding subunit"/>
    <property type="match status" value="1"/>
</dbReference>
<dbReference type="FunFam" id="3.40.1110.10:FF:000007">
    <property type="entry name" value="Potassium-transporting ATPase ATP-binding subunit"/>
    <property type="match status" value="1"/>
</dbReference>
<dbReference type="Gene3D" id="3.40.1110.10">
    <property type="entry name" value="Calcium-transporting ATPase, cytoplasmic domain N"/>
    <property type="match status" value="1"/>
</dbReference>
<dbReference type="Gene3D" id="2.70.150.10">
    <property type="entry name" value="Calcium-transporting ATPase, cytoplasmic transduction domain A"/>
    <property type="match status" value="1"/>
</dbReference>
<dbReference type="Gene3D" id="3.40.50.1000">
    <property type="entry name" value="HAD superfamily/HAD-like"/>
    <property type="match status" value="1"/>
</dbReference>
<dbReference type="HAMAP" id="MF_00285">
    <property type="entry name" value="KdpB"/>
    <property type="match status" value="1"/>
</dbReference>
<dbReference type="InterPro" id="IPR023299">
    <property type="entry name" value="ATPase_P-typ_cyto_dom_N"/>
</dbReference>
<dbReference type="InterPro" id="IPR018303">
    <property type="entry name" value="ATPase_P-typ_P_site"/>
</dbReference>
<dbReference type="InterPro" id="IPR023298">
    <property type="entry name" value="ATPase_P-typ_TM_dom_sf"/>
</dbReference>
<dbReference type="InterPro" id="IPR008250">
    <property type="entry name" value="ATPase_P-typ_transduc_dom_A_sf"/>
</dbReference>
<dbReference type="InterPro" id="IPR036412">
    <property type="entry name" value="HAD-like_sf"/>
</dbReference>
<dbReference type="InterPro" id="IPR023214">
    <property type="entry name" value="HAD_sf"/>
</dbReference>
<dbReference type="InterPro" id="IPR006391">
    <property type="entry name" value="P-type_ATPase_bsu_IA"/>
</dbReference>
<dbReference type="InterPro" id="IPR001757">
    <property type="entry name" value="P_typ_ATPase"/>
</dbReference>
<dbReference type="InterPro" id="IPR044492">
    <property type="entry name" value="P_typ_ATPase_HD_dom"/>
</dbReference>
<dbReference type="NCBIfam" id="TIGR01494">
    <property type="entry name" value="ATPase_P-type"/>
    <property type="match status" value="2"/>
</dbReference>
<dbReference type="NCBIfam" id="TIGR01497">
    <property type="entry name" value="kdpB"/>
    <property type="match status" value="1"/>
</dbReference>
<dbReference type="PANTHER" id="PTHR43743">
    <property type="entry name" value="POTASSIUM-TRANSPORTING ATPASE ATP-BINDING SUBUNIT"/>
    <property type="match status" value="1"/>
</dbReference>
<dbReference type="PANTHER" id="PTHR43743:SF1">
    <property type="entry name" value="POTASSIUM-TRANSPORTING ATPASE ATP-BINDING SUBUNIT"/>
    <property type="match status" value="1"/>
</dbReference>
<dbReference type="Pfam" id="PF00122">
    <property type="entry name" value="E1-E2_ATPase"/>
    <property type="match status" value="1"/>
</dbReference>
<dbReference type="Pfam" id="PF00702">
    <property type="entry name" value="Hydrolase"/>
    <property type="match status" value="1"/>
</dbReference>
<dbReference type="PRINTS" id="PR00119">
    <property type="entry name" value="CATATPASE"/>
</dbReference>
<dbReference type="SFLD" id="SFLDS00003">
    <property type="entry name" value="Haloacid_Dehalogenase"/>
    <property type="match status" value="1"/>
</dbReference>
<dbReference type="SFLD" id="SFLDF00027">
    <property type="entry name" value="p-type_atpase"/>
    <property type="match status" value="1"/>
</dbReference>
<dbReference type="SUPFAM" id="SSF81653">
    <property type="entry name" value="Calcium ATPase, transduction domain A"/>
    <property type="match status" value="1"/>
</dbReference>
<dbReference type="SUPFAM" id="SSF81665">
    <property type="entry name" value="Calcium ATPase, transmembrane domain M"/>
    <property type="match status" value="1"/>
</dbReference>
<dbReference type="SUPFAM" id="SSF56784">
    <property type="entry name" value="HAD-like"/>
    <property type="match status" value="1"/>
</dbReference>
<dbReference type="PROSITE" id="PS00154">
    <property type="entry name" value="ATPASE_E1_E2"/>
    <property type="match status" value="1"/>
</dbReference>
<organism>
    <name type="scientific">Clostridium perfringens (strain ATCC 13124 / DSM 756 / JCM 1290 / NCIMB 6125 / NCTC 8237 / Type A)</name>
    <dbReference type="NCBI Taxonomy" id="195103"/>
    <lineage>
        <taxon>Bacteria</taxon>
        <taxon>Bacillati</taxon>
        <taxon>Bacillota</taxon>
        <taxon>Clostridia</taxon>
        <taxon>Eubacteriales</taxon>
        <taxon>Clostridiaceae</taxon>
        <taxon>Clostridium</taxon>
    </lineage>
</organism>
<accession>Q0TRT3</accession>